<accession>Q9T4N0</accession>
<protein>
    <recommendedName>
        <fullName>Cytochrome b</fullName>
    </recommendedName>
    <alternativeName>
        <fullName>Complex III subunit 3</fullName>
    </alternativeName>
    <alternativeName>
        <fullName>Complex III subunit III</fullName>
    </alternativeName>
    <alternativeName>
        <fullName>Cytochrome b-c1 complex subunit 3</fullName>
    </alternativeName>
    <alternativeName>
        <fullName>Ubiquinol-cytochrome-c reductase complex cytochrome b subunit</fullName>
    </alternativeName>
</protein>
<dbReference type="EMBL" id="AF157866">
    <property type="protein sequence ID" value="AAD50150.1"/>
    <property type="molecule type" value="Genomic_DNA"/>
</dbReference>
<dbReference type="EMBL" id="AF157869">
    <property type="protein sequence ID" value="AAD50153.1"/>
    <property type="molecule type" value="Genomic_DNA"/>
</dbReference>
<dbReference type="GO" id="GO:0005743">
    <property type="term" value="C:mitochondrial inner membrane"/>
    <property type="evidence" value="ECO:0007669"/>
    <property type="project" value="UniProtKB-SubCell"/>
</dbReference>
<dbReference type="GO" id="GO:0045275">
    <property type="term" value="C:respiratory chain complex III"/>
    <property type="evidence" value="ECO:0007669"/>
    <property type="project" value="InterPro"/>
</dbReference>
<dbReference type="GO" id="GO:0046872">
    <property type="term" value="F:metal ion binding"/>
    <property type="evidence" value="ECO:0007669"/>
    <property type="project" value="UniProtKB-KW"/>
</dbReference>
<dbReference type="GO" id="GO:0008121">
    <property type="term" value="F:ubiquinol-cytochrome-c reductase activity"/>
    <property type="evidence" value="ECO:0007669"/>
    <property type="project" value="InterPro"/>
</dbReference>
<dbReference type="GO" id="GO:0006122">
    <property type="term" value="P:mitochondrial electron transport, ubiquinol to cytochrome c"/>
    <property type="evidence" value="ECO:0007669"/>
    <property type="project" value="TreeGrafter"/>
</dbReference>
<dbReference type="CDD" id="cd00290">
    <property type="entry name" value="cytochrome_b_C"/>
    <property type="match status" value="1"/>
</dbReference>
<dbReference type="CDD" id="cd00284">
    <property type="entry name" value="Cytochrome_b_N"/>
    <property type="match status" value="1"/>
</dbReference>
<dbReference type="FunFam" id="1.20.810.10:FF:000002">
    <property type="entry name" value="Cytochrome b"/>
    <property type="match status" value="1"/>
</dbReference>
<dbReference type="Gene3D" id="1.20.810.10">
    <property type="entry name" value="Cytochrome Bc1 Complex, Chain C"/>
    <property type="match status" value="1"/>
</dbReference>
<dbReference type="InterPro" id="IPR005798">
    <property type="entry name" value="Cyt_b/b6_C"/>
</dbReference>
<dbReference type="InterPro" id="IPR036150">
    <property type="entry name" value="Cyt_b/b6_C_sf"/>
</dbReference>
<dbReference type="InterPro" id="IPR005797">
    <property type="entry name" value="Cyt_b/b6_N"/>
</dbReference>
<dbReference type="InterPro" id="IPR027387">
    <property type="entry name" value="Cytb/b6-like_sf"/>
</dbReference>
<dbReference type="InterPro" id="IPR030689">
    <property type="entry name" value="Cytochrome_b"/>
</dbReference>
<dbReference type="InterPro" id="IPR048260">
    <property type="entry name" value="Cytochrome_b_C_euk/bac"/>
</dbReference>
<dbReference type="InterPro" id="IPR048259">
    <property type="entry name" value="Cytochrome_b_N_euk/bac"/>
</dbReference>
<dbReference type="InterPro" id="IPR016174">
    <property type="entry name" value="Di-haem_cyt_TM"/>
</dbReference>
<dbReference type="PANTHER" id="PTHR19271">
    <property type="entry name" value="CYTOCHROME B"/>
    <property type="match status" value="1"/>
</dbReference>
<dbReference type="PANTHER" id="PTHR19271:SF16">
    <property type="entry name" value="CYTOCHROME B"/>
    <property type="match status" value="1"/>
</dbReference>
<dbReference type="Pfam" id="PF00032">
    <property type="entry name" value="Cytochrom_B_C"/>
    <property type="match status" value="1"/>
</dbReference>
<dbReference type="Pfam" id="PF00033">
    <property type="entry name" value="Cytochrome_B"/>
    <property type="match status" value="1"/>
</dbReference>
<dbReference type="PIRSF" id="PIRSF038885">
    <property type="entry name" value="COB"/>
    <property type="match status" value="1"/>
</dbReference>
<dbReference type="SUPFAM" id="SSF81648">
    <property type="entry name" value="a domain/subunit of cytochrome bc1 complex (Ubiquinol-cytochrome c reductase)"/>
    <property type="match status" value="1"/>
</dbReference>
<dbReference type="SUPFAM" id="SSF81342">
    <property type="entry name" value="Transmembrane di-heme cytochromes"/>
    <property type="match status" value="1"/>
</dbReference>
<dbReference type="PROSITE" id="PS51003">
    <property type="entry name" value="CYTB_CTER"/>
    <property type="match status" value="1"/>
</dbReference>
<dbReference type="PROSITE" id="PS51002">
    <property type="entry name" value="CYTB_NTER"/>
    <property type="match status" value="1"/>
</dbReference>
<comment type="function">
    <text evidence="2">Component of the ubiquinol-cytochrome c reductase complex (complex III or cytochrome b-c1 complex) that is part of the mitochondrial respiratory chain. The b-c1 complex mediates electron transfer from ubiquinol to cytochrome c. Contributes to the generation of a proton gradient across the mitochondrial membrane that is then used for ATP synthesis.</text>
</comment>
<comment type="cofactor">
    <cofactor evidence="2">
        <name>heme b</name>
        <dbReference type="ChEBI" id="CHEBI:60344"/>
    </cofactor>
    <text evidence="2">Binds 2 heme b groups non-covalently.</text>
</comment>
<comment type="subunit">
    <text evidence="2">The cytochrome bc1 complex contains 11 subunits: 3 respiratory subunits (MT-CYB, CYC1 and UQCRFS1), 2 core proteins (UQCRC1 and UQCRC2) and 6 low-molecular weight proteins (UQCRH/QCR6, UQCRB/QCR7, UQCRQ/QCR8, UQCR10/QCR9, UQCR11/QCR10 and a cleavage product of UQCRFS1). This cytochrome bc1 complex then forms a dimer.</text>
</comment>
<comment type="subcellular location">
    <subcellularLocation>
        <location evidence="2">Mitochondrion inner membrane</location>
        <topology evidence="2">Multi-pass membrane protein</topology>
    </subcellularLocation>
</comment>
<comment type="miscellaneous">
    <text evidence="1">Heme 1 (or BL or b562) is low-potential and absorbs at about 562 nm, and heme 2 (or BH or b566) is high-potential and absorbs at about 566 nm.</text>
</comment>
<comment type="similarity">
    <text evidence="3 4">Belongs to the cytochrome b family.</text>
</comment>
<comment type="caution">
    <text evidence="2">The full-length protein contains only eight transmembrane helices, not nine as predicted by bioinformatics tools.</text>
</comment>
<geneLocation type="mitochondrion"/>
<keyword id="KW-0249">Electron transport</keyword>
<keyword id="KW-0349">Heme</keyword>
<keyword id="KW-0408">Iron</keyword>
<keyword id="KW-0472">Membrane</keyword>
<keyword id="KW-0479">Metal-binding</keyword>
<keyword id="KW-0496">Mitochondrion</keyword>
<keyword id="KW-0999">Mitochondrion inner membrane</keyword>
<keyword id="KW-0679">Respiratory chain</keyword>
<keyword id="KW-0812">Transmembrane</keyword>
<keyword id="KW-1133">Transmembrane helix</keyword>
<keyword id="KW-0813">Transport</keyword>
<keyword id="KW-0830">Ubiquinone</keyword>
<organism>
    <name type="scientific">Spermophilus pallidicauda</name>
    <name type="common">Arctic ground squirrel</name>
    <dbReference type="NCBI Taxonomy" id="99850"/>
    <lineage>
        <taxon>Eukaryota</taxon>
        <taxon>Metazoa</taxon>
        <taxon>Chordata</taxon>
        <taxon>Craniata</taxon>
        <taxon>Vertebrata</taxon>
        <taxon>Euteleostomi</taxon>
        <taxon>Mammalia</taxon>
        <taxon>Eutheria</taxon>
        <taxon>Euarchontoglires</taxon>
        <taxon>Glires</taxon>
        <taxon>Rodentia</taxon>
        <taxon>Sciuromorpha</taxon>
        <taxon>Sciuridae</taxon>
        <taxon>Xerinae</taxon>
        <taxon>Marmotini</taxon>
        <taxon>Spermophilus</taxon>
    </lineage>
</organism>
<reference key="1">
    <citation type="journal article" date="2003" name="J. Mammal. Evol.">
        <title>Phylogeny and evolutionary history of the ground squirrels (Rodentia: Marmotinae).</title>
        <authorList>
            <person name="Harrison R.G."/>
            <person name="Bogdanowicz S.M."/>
            <person name="Hoffmann R.S."/>
            <person name="Yensen E."/>
            <person name="Sherman P.W."/>
        </authorList>
    </citation>
    <scope>NUCLEOTIDE SEQUENCE [GENOMIC DNA]</scope>
</reference>
<gene>
    <name type="primary">MT-CYB</name>
    <name type="synonym">COB</name>
    <name type="synonym">CYTB</name>
    <name type="synonym">MTCYB</name>
</gene>
<feature type="chain" id="PRO_0000255139" description="Cytochrome b">
    <location>
        <begin position="1"/>
        <end position="379"/>
    </location>
</feature>
<feature type="transmembrane region" description="Helical" evidence="2">
    <location>
        <begin position="33"/>
        <end position="53"/>
    </location>
</feature>
<feature type="transmembrane region" description="Helical" evidence="2">
    <location>
        <begin position="77"/>
        <end position="98"/>
    </location>
</feature>
<feature type="transmembrane region" description="Helical" evidence="2">
    <location>
        <begin position="113"/>
        <end position="133"/>
    </location>
</feature>
<feature type="transmembrane region" description="Helical" evidence="2">
    <location>
        <begin position="178"/>
        <end position="198"/>
    </location>
</feature>
<feature type="transmembrane region" description="Helical" evidence="2">
    <location>
        <begin position="226"/>
        <end position="246"/>
    </location>
</feature>
<feature type="transmembrane region" description="Helical" evidence="2">
    <location>
        <begin position="288"/>
        <end position="308"/>
    </location>
</feature>
<feature type="transmembrane region" description="Helical" evidence="2">
    <location>
        <begin position="320"/>
        <end position="340"/>
    </location>
</feature>
<feature type="transmembrane region" description="Helical" evidence="2">
    <location>
        <begin position="347"/>
        <end position="367"/>
    </location>
</feature>
<feature type="binding site" description="axial binding residue" evidence="2">
    <location>
        <position position="83"/>
    </location>
    <ligand>
        <name>heme b</name>
        <dbReference type="ChEBI" id="CHEBI:60344"/>
        <label>b562</label>
    </ligand>
    <ligandPart>
        <name>Fe</name>
        <dbReference type="ChEBI" id="CHEBI:18248"/>
    </ligandPart>
</feature>
<feature type="binding site" description="axial binding residue" evidence="2">
    <location>
        <position position="97"/>
    </location>
    <ligand>
        <name>heme b</name>
        <dbReference type="ChEBI" id="CHEBI:60344"/>
        <label>b566</label>
    </ligand>
    <ligandPart>
        <name>Fe</name>
        <dbReference type="ChEBI" id="CHEBI:18248"/>
    </ligandPart>
</feature>
<feature type="binding site" description="axial binding residue" evidence="2">
    <location>
        <position position="182"/>
    </location>
    <ligand>
        <name>heme b</name>
        <dbReference type="ChEBI" id="CHEBI:60344"/>
        <label>b562</label>
    </ligand>
    <ligandPart>
        <name>Fe</name>
        <dbReference type="ChEBI" id="CHEBI:18248"/>
    </ligandPart>
</feature>
<feature type="binding site" description="axial binding residue" evidence="2">
    <location>
        <position position="196"/>
    </location>
    <ligand>
        <name>heme b</name>
        <dbReference type="ChEBI" id="CHEBI:60344"/>
        <label>b566</label>
    </ligand>
    <ligandPart>
        <name>Fe</name>
        <dbReference type="ChEBI" id="CHEBI:18248"/>
    </ligandPart>
</feature>
<feature type="binding site" evidence="2">
    <location>
        <position position="201"/>
    </location>
    <ligand>
        <name>a ubiquinone</name>
        <dbReference type="ChEBI" id="CHEBI:16389"/>
    </ligand>
</feature>
<name>CYB_SPEPL</name>
<sequence>MTNTRKTHPLXKIINHSFIDLPAPSNISAWWNFGSLLGLCLIIQILTGLFLAMHYTSDTMTAFSSVTHICRDVNYGWLIRYMHANGASMFFICLFLHVGRGMYYGSYIYFETWNIGVILLFAVMATAFMGYVLPWGQMSFWGATVITNLLSAIPYIGTTLVEWIWGGFSVDKATLTRFFAFHFILPFIIAALAMVHLLFLHETGSNNPSGLISDSDKIPFHPYYTIKDTLGVLLLILTLMALVLFSPDLLGDPDNYTPANPLSTPPHIKPEWYFLFAYAILRSIPNKLGGVLALVFSILILMLFPLLHLSKQRSMMFRPLSQCVFWILVADLFTLTWIGGQPVEHPFIIIGQLASILYFAIILLILPTVSMIENKLLKW</sequence>
<evidence type="ECO:0000250" key="1"/>
<evidence type="ECO:0000250" key="2">
    <source>
        <dbReference type="UniProtKB" id="P00157"/>
    </source>
</evidence>
<evidence type="ECO:0000255" key="3">
    <source>
        <dbReference type="PROSITE-ProRule" id="PRU00967"/>
    </source>
</evidence>
<evidence type="ECO:0000255" key="4">
    <source>
        <dbReference type="PROSITE-ProRule" id="PRU00968"/>
    </source>
</evidence>
<proteinExistence type="inferred from homology"/>